<protein>
    <recommendedName>
        <fullName evidence="5">Aminotransferase ALT4</fullName>
        <ecNumber evidence="7">2.3.1.-</ecNumber>
    </recommendedName>
    <alternativeName>
        <fullName evidence="5">AAL-toxin biosynthesis cluster protein 4</fullName>
    </alternativeName>
</protein>
<keyword id="KW-0808">Transferase</keyword>
<feature type="chain" id="PRO_0000449853" description="Aminotransferase ALT4">
    <location>
        <begin position="1"/>
        <end position="808"/>
    </location>
</feature>
<proteinExistence type="inferred from homology"/>
<comment type="function">
    <text evidence="1 2 3 4 7">Aminotransferase; part of the gene cluster that mediates the biosynthesis of the host-selective toxins (HSTs) AAL-toxins, sphinganine-analog mycotoxins responsible for Alternaria stem canker on tomato by the tomato pathotype (PubMed:18435561, PubMed:19449880, PubMed:19749175). The biosynthesis starts with the polyketide synthase ALT1-catalyzed C-16 carbon chain assembly from one starter acetyl-CoA unit with malonyl-CoA extender units (PubMed:18435561, PubMed:19449880). ALT1 also selectively transfers methyl groups at the first and the third cycle of chain elongation for AAL toxin (PubMed:19449880). The C-16 polyketide chain is released from the enzyme by a nucleophilic attack of a carbanion, which is derived from R-carbon of glycin by decarboxylation, on the carbonyl carbon of polyketide acyl chain (Probable). This step is probably catalyzed by a pyridoxal 5'-phosphate-dependent aminoacyl transferase ALT4 (Probable). The respective functions of the other enzymes encoded by the cluster have still to be elucidated (Probable). The sphingosine N-acyltransferase-like protein ALT7 seems not to act as a resistance/self-tolerance factor against the toxin in the toxin biosynthetic gene cluster, contrary to what is expected (Ref.5).</text>
</comment>
<comment type="cofactor">
    <cofactor>
        <name>pyridoxal 5'-phosphate</name>
        <dbReference type="ChEBI" id="CHEBI:597326"/>
    </cofactor>
</comment>
<comment type="pathway">
    <text evidence="7">Mycotoxin biosynthesis.</text>
</comment>
<comment type="miscellaneous">
    <text evidence="3">Gene clusters encoding host-selective toxins (HSTs) are localized on conditionally dispensable chromosomes (CDCs), also called supernumerary chromosomes, where they are present in multiple copies. The CDCs are not essential for saprophytic growth but controls host-selective pathogenicity.</text>
</comment>
<comment type="similarity">
    <text evidence="6">Belongs to the class-II pyridoxal-phosphate-dependent aminotransferase family. BioF subfamily.</text>
</comment>
<organism>
    <name type="scientific">Alternaria alternata</name>
    <name type="common">Alternaria rot fungus</name>
    <name type="synonym">Torula alternata</name>
    <dbReference type="NCBI Taxonomy" id="5599"/>
    <lineage>
        <taxon>Eukaryota</taxon>
        <taxon>Fungi</taxon>
        <taxon>Dikarya</taxon>
        <taxon>Ascomycota</taxon>
        <taxon>Pezizomycotina</taxon>
        <taxon>Dothideomycetes</taxon>
        <taxon>Pleosporomycetidae</taxon>
        <taxon>Pleosporales</taxon>
        <taxon>Pleosporineae</taxon>
        <taxon>Pleosporaceae</taxon>
        <taxon>Alternaria</taxon>
        <taxon>Alternaria sect. Alternaria</taxon>
        <taxon>Alternaria alternata complex</taxon>
    </lineage>
</organism>
<name>ALT4_ALTAL</name>
<sequence>MSVVRPKKVFQTPIDPGVSLRRKKDFYIWAATIGFAQLWRDIKAFKWYRPLQMADLASHYFYIPLGRLDPRILSSAPNDRMLIKTIPHEMSQDYDETGILGCPGREVVNAGSNNYGGFTRFEYGSASVIKLALRNLPFNPAPEELNTLVEREMADYMEADACATAISGYGANLLAFLTVAETAKLSDRQCIFLLDEESHSSMFVGAFLNKEAKFHRFKHNDIADLEYKLRTMKETSPNALVCVAIEGMYSLAGNVAPIPAILALRKVFNFCLLVDEAHSFMAIGCKGRGSFEWWQARGYECPLSEVDIMTATLSKSVGCTGGLVMANKIYASNLQHQARLQREEGDECLSTIVLFRALTLIRKPLFIERRMKTLEEKARYVAERLDEAGCLLLSPPGSPIICFPVGTVQQASNFVAECLKKGFAVACGVPPATPIWSCRVRVCIFATTSWGDILALVNTLIAVSCKLRIDGVQSMKFDTDSLPKVSIKEDIVSDEGNAADLALQEYVEQLAAKYPAEDCRAIAPLNVAQAREVFEYGVQSFEMYGIGASSVRWFYGTFDVFIRLEQRLAGLYPSLISHSGKCRAMLGSDANVMAVSLLSAVAGPMYAKDVLNLVLVPQNAPCYVKKGATLDKVQPSTRVTLYEDLRDLEVEGTKLQKHRYYHVTLYLETVDEDGSILDLSNRIKDILLTLKNAPSLTGLRLILDDSRGLGKIGPRHLGFLDQMESQHGVSFFSTALGPQLAAITTVVVFGSWFHSLNHQGGYVISSEAFTEAHTVSSKSFVFSTPPMIVQAAMSEKTLELLAGGSGLV</sequence>
<evidence type="ECO:0000269" key="1">
    <source>
    </source>
</evidence>
<evidence type="ECO:0000269" key="2">
    <source>
    </source>
</evidence>
<evidence type="ECO:0000269" key="3">
    <source>
    </source>
</evidence>
<evidence type="ECO:0000269" key="4">
    <source ref="5"/>
</evidence>
<evidence type="ECO:0000303" key="5">
    <source>
    </source>
</evidence>
<evidence type="ECO:0000305" key="6"/>
<evidence type="ECO:0000305" key="7">
    <source>
    </source>
</evidence>
<gene>
    <name evidence="5" type="primary">ALT4</name>
</gene>
<reference key="1">
    <citation type="submission" date="2014-06" db="EMBL/GenBank/DDBJ databases">
        <title>AAL-toxin biosynthetic genes cluster in the tomato pathotype of Alternaria alternata.</title>
        <authorList>
            <person name="Akagi Y."/>
            <person name="Akamatsu H."/>
            <person name="Takao K."/>
            <person name="Tsuge T."/>
            <person name="Kodama M."/>
        </authorList>
    </citation>
    <scope>NUCLEOTIDE SEQUENCE [GENOMIC DNA]</scope>
    <source>
        <strain>As-27</strain>
    </source>
</reference>
<reference key="2">
    <citation type="journal article" date="2008" name="J. Nat. Prod.">
        <title>Functional complementation of fumonisin biosynthesis in FUM1-disrupted fusarium verticillioides by the AAL-toxin polyketide synthase gene ALT1 from Alternaria alternata f. sp. Lycopersici.</title>
        <authorList>
            <person name="Zhu X."/>
            <person name="Vogeler C."/>
            <person name="Du L."/>
        </authorList>
    </citation>
    <scope>FUNCTION</scope>
</reference>
<reference key="3">
    <citation type="journal article" date="2009" name="Eukaryot. Cell">
        <title>Horizontal chromosome transfer, a mechanism for the evolution and differentiation of a plant-pathogenic fungus.</title>
        <authorList>
            <person name="Akagi Y."/>
            <person name="Akamatsu H."/>
            <person name="Otani H."/>
            <person name="Kodama M."/>
        </authorList>
    </citation>
    <scope>FUNCTION</scope>
</reference>
<reference key="4">
    <citation type="journal article" date="2009" name="J. Nat. Prod.">
        <title>Introduction of the AAL-toxin polyketide synthase gene ALT1 into FUM1-disrupted Fusarium verticillioides produces metabolites with the fumonisin methylation pattern.</title>
        <authorList>
            <person name="Li Y."/>
            <person name="Shen Y."/>
            <person name="Zhu X."/>
            <person name="Du L."/>
        </authorList>
    </citation>
    <scope>FUNCTION</scope>
</reference>
<reference key="5">
    <citation type="journal article" date="2012" name="J. Plant Pathol. Microbiol.">
        <title>Functional analysis of the ceramide synthase gene ALT7, a homolog of the disease resistance gene Asc1, in the plant pathogen Alternaria alternata.</title>
        <authorList>
            <person name="Kheder A.A."/>
            <person name="Akagi Y."/>
            <person name="Tsuge T."/>
            <person name="Kodama M."/>
        </authorList>
    </citation>
    <scope>FUNCTION</scope>
</reference>
<dbReference type="EC" id="2.3.1.-" evidence="7"/>
<dbReference type="EMBL" id="AB969680">
    <property type="protein sequence ID" value="BBG74270.1"/>
    <property type="molecule type" value="Genomic_DNA"/>
</dbReference>
<dbReference type="SMR" id="A0A3G9HHK2"/>
<dbReference type="VEuPathDB" id="FungiDB:CC77DRAFT_949724"/>
<dbReference type="GO" id="GO:0030170">
    <property type="term" value="F:pyridoxal phosphate binding"/>
    <property type="evidence" value="ECO:0007669"/>
    <property type="project" value="InterPro"/>
</dbReference>
<dbReference type="GO" id="GO:0016740">
    <property type="term" value="F:transferase activity"/>
    <property type="evidence" value="ECO:0007669"/>
    <property type="project" value="UniProtKB-KW"/>
</dbReference>
<dbReference type="GO" id="GO:0009058">
    <property type="term" value="P:biosynthetic process"/>
    <property type="evidence" value="ECO:0007669"/>
    <property type="project" value="InterPro"/>
</dbReference>
<dbReference type="Gene3D" id="3.90.1150.10">
    <property type="entry name" value="Aspartate Aminotransferase, domain 1"/>
    <property type="match status" value="1"/>
</dbReference>
<dbReference type="Gene3D" id="3.40.640.10">
    <property type="entry name" value="Type I PLP-dependent aspartate aminotransferase-like (Major domain)"/>
    <property type="match status" value="2"/>
</dbReference>
<dbReference type="InterPro" id="IPR004839">
    <property type="entry name" value="Aminotransferase_I/II_large"/>
</dbReference>
<dbReference type="InterPro" id="IPR050087">
    <property type="entry name" value="AON_synthase_class-II"/>
</dbReference>
<dbReference type="InterPro" id="IPR015424">
    <property type="entry name" value="PyrdxlP-dep_Trfase"/>
</dbReference>
<dbReference type="InterPro" id="IPR015421">
    <property type="entry name" value="PyrdxlP-dep_Trfase_major"/>
</dbReference>
<dbReference type="InterPro" id="IPR015422">
    <property type="entry name" value="PyrdxlP-dep_Trfase_small"/>
</dbReference>
<dbReference type="PANTHER" id="PTHR13693">
    <property type="entry name" value="CLASS II AMINOTRANSFERASE/8-AMINO-7-OXONONANOATE SYNTHASE"/>
    <property type="match status" value="1"/>
</dbReference>
<dbReference type="Pfam" id="PF00155">
    <property type="entry name" value="Aminotran_1_2"/>
    <property type="match status" value="1"/>
</dbReference>
<dbReference type="SUPFAM" id="SSF53383">
    <property type="entry name" value="PLP-dependent transferases"/>
    <property type="match status" value="2"/>
</dbReference>
<accession>A0A3G9HHK2</accession>